<dbReference type="EMBL" id="AE017194">
    <property type="protein sequence ID" value="AAS42899.1"/>
    <property type="molecule type" value="Genomic_DNA"/>
</dbReference>
<dbReference type="SMR" id="Q732B8"/>
<dbReference type="KEGG" id="bca:BCE_3996"/>
<dbReference type="HOGENOM" id="CLU_160493_1_0_9"/>
<dbReference type="Proteomes" id="UP000002527">
    <property type="component" value="Chromosome"/>
</dbReference>
<dbReference type="Gene3D" id="1.10.287.750">
    <property type="entry name" value="SO2669-like"/>
    <property type="match status" value="1"/>
</dbReference>
<dbReference type="HAMAP" id="MF_01560">
    <property type="entry name" value="UPF0358"/>
    <property type="match status" value="1"/>
</dbReference>
<dbReference type="InterPro" id="IPR009983">
    <property type="entry name" value="UPF0358"/>
</dbReference>
<dbReference type="InterPro" id="IPR036270">
    <property type="entry name" value="UPF0358_sf"/>
</dbReference>
<dbReference type="NCBIfam" id="NF010187">
    <property type="entry name" value="PRK13666.1"/>
    <property type="match status" value="1"/>
</dbReference>
<dbReference type="Pfam" id="PF07408">
    <property type="entry name" value="DUF1507"/>
    <property type="match status" value="1"/>
</dbReference>
<dbReference type="SUPFAM" id="SSF140404">
    <property type="entry name" value="EF2458-like"/>
    <property type="match status" value="1"/>
</dbReference>
<reference key="1">
    <citation type="journal article" date="2004" name="Nucleic Acids Res.">
        <title>The genome sequence of Bacillus cereus ATCC 10987 reveals metabolic adaptations and a large plasmid related to Bacillus anthracis pXO1.</title>
        <authorList>
            <person name="Rasko D.A."/>
            <person name="Ravel J."/>
            <person name="Oekstad O.A."/>
            <person name="Helgason E."/>
            <person name="Cer R.Z."/>
            <person name="Jiang L."/>
            <person name="Shores K.A."/>
            <person name="Fouts D.E."/>
            <person name="Tourasse N.J."/>
            <person name="Angiuoli S.V."/>
            <person name="Kolonay J.F."/>
            <person name="Nelson W.C."/>
            <person name="Kolstoe A.-B."/>
            <person name="Fraser C.M."/>
            <person name="Read T.D."/>
        </authorList>
    </citation>
    <scope>NUCLEOTIDE SEQUENCE [LARGE SCALE GENOMIC DNA]</scope>
    <source>
        <strain>ATCC 10987 / NRS 248</strain>
    </source>
</reference>
<comment type="similarity">
    <text evidence="1">Belongs to the UPF0358 family.</text>
</comment>
<proteinExistence type="inferred from homology"/>
<gene>
    <name type="ordered locus">BCE_3996</name>
</gene>
<name>Y3996_BACC1</name>
<sequence length="95" mass="10756">MASETVSNHQEKALALLQADAEKILRLIKVQMDHLTMPQCPLYEEVLDTQMFGLSREVDFAVRLGLISEEQGKAMLGELERELSALHEAFTNKQQ</sequence>
<organism>
    <name type="scientific">Bacillus cereus (strain ATCC 10987 / NRS 248)</name>
    <dbReference type="NCBI Taxonomy" id="222523"/>
    <lineage>
        <taxon>Bacteria</taxon>
        <taxon>Bacillati</taxon>
        <taxon>Bacillota</taxon>
        <taxon>Bacilli</taxon>
        <taxon>Bacillales</taxon>
        <taxon>Bacillaceae</taxon>
        <taxon>Bacillus</taxon>
        <taxon>Bacillus cereus group</taxon>
    </lineage>
</organism>
<evidence type="ECO:0000255" key="1">
    <source>
        <dbReference type="HAMAP-Rule" id="MF_01560"/>
    </source>
</evidence>
<protein>
    <recommendedName>
        <fullName evidence="1">UPF0358 protein BCE_3996</fullName>
    </recommendedName>
</protein>
<feature type="chain" id="PRO_0000110636" description="UPF0358 protein BCE_3996">
    <location>
        <begin position="1"/>
        <end position="95"/>
    </location>
</feature>
<accession>Q732B8</accession>